<reference key="1">
    <citation type="journal article" date="2010" name="J. Bacteriol.">
        <title>Genome sequence of the Fleming strain of Micrococcus luteus, a simple free-living actinobacterium.</title>
        <authorList>
            <person name="Young M."/>
            <person name="Artsatbanov V."/>
            <person name="Beller H.R."/>
            <person name="Chandra G."/>
            <person name="Chater K.F."/>
            <person name="Dover L.G."/>
            <person name="Goh E.B."/>
            <person name="Kahan T."/>
            <person name="Kaprelyants A.S."/>
            <person name="Kyrpides N."/>
            <person name="Lapidus A."/>
            <person name="Lowry S.R."/>
            <person name="Lykidis A."/>
            <person name="Mahillon J."/>
            <person name="Markowitz V."/>
            <person name="Mavromatis K."/>
            <person name="Mukamolova G.V."/>
            <person name="Oren A."/>
            <person name="Rokem J.S."/>
            <person name="Smith M.C."/>
            <person name="Young D.I."/>
            <person name="Greenblatt C.L."/>
        </authorList>
    </citation>
    <scope>NUCLEOTIDE SEQUENCE [LARGE SCALE GENOMIC DNA]</scope>
    <source>
        <strain>ATCC 4698 / DSM 20030 / JCM 1464 / CCM 169 / CCUG 5858 / IAM 1056 / NBRC 3333 / NCIMB 9278 / NCTC 2665 / VKM Ac-2230</strain>
    </source>
</reference>
<protein>
    <recommendedName>
        <fullName evidence="1">Large ribosomal subunit protein uL5</fullName>
    </recommendedName>
    <alternativeName>
        <fullName evidence="2">50S ribosomal protein L5</fullName>
    </alternativeName>
</protein>
<feature type="chain" id="PRO_1000214637" description="Large ribosomal subunit protein uL5">
    <location>
        <begin position="1"/>
        <end position="191"/>
    </location>
</feature>
<accession>C5CC50</accession>
<gene>
    <name evidence="1" type="primary">rplE</name>
    <name type="ordered locus">Mlut_17040</name>
</gene>
<name>RL5_MICLC</name>
<dbReference type="EMBL" id="CP001628">
    <property type="protein sequence ID" value="ACS31191.1"/>
    <property type="molecule type" value="Genomic_DNA"/>
</dbReference>
<dbReference type="RefSeq" id="WP_002857492.1">
    <property type="nucleotide sequence ID" value="NC_012803.1"/>
</dbReference>
<dbReference type="SMR" id="C5CC50"/>
<dbReference type="STRING" id="465515.Mlut_17040"/>
<dbReference type="EnsemblBacteria" id="ACS31191">
    <property type="protein sequence ID" value="ACS31191"/>
    <property type="gene ID" value="Mlut_17040"/>
</dbReference>
<dbReference type="GeneID" id="93343571"/>
<dbReference type="KEGG" id="mlu:Mlut_17040"/>
<dbReference type="eggNOG" id="COG0094">
    <property type="taxonomic scope" value="Bacteria"/>
</dbReference>
<dbReference type="HOGENOM" id="CLU_061015_2_1_11"/>
<dbReference type="Proteomes" id="UP000000738">
    <property type="component" value="Chromosome"/>
</dbReference>
<dbReference type="GO" id="GO:1990904">
    <property type="term" value="C:ribonucleoprotein complex"/>
    <property type="evidence" value="ECO:0007669"/>
    <property type="project" value="UniProtKB-KW"/>
</dbReference>
<dbReference type="GO" id="GO:0005840">
    <property type="term" value="C:ribosome"/>
    <property type="evidence" value="ECO:0007669"/>
    <property type="project" value="UniProtKB-KW"/>
</dbReference>
<dbReference type="GO" id="GO:0019843">
    <property type="term" value="F:rRNA binding"/>
    <property type="evidence" value="ECO:0007669"/>
    <property type="project" value="UniProtKB-UniRule"/>
</dbReference>
<dbReference type="GO" id="GO:0003735">
    <property type="term" value="F:structural constituent of ribosome"/>
    <property type="evidence" value="ECO:0007669"/>
    <property type="project" value="InterPro"/>
</dbReference>
<dbReference type="GO" id="GO:0000049">
    <property type="term" value="F:tRNA binding"/>
    <property type="evidence" value="ECO:0007669"/>
    <property type="project" value="UniProtKB-UniRule"/>
</dbReference>
<dbReference type="GO" id="GO:0006412">
    <property type="term" value="P:translation"/>
    <property type="evidence" value="ECO:0007669"/>
    <property type="project" value="UniProtKB-UniRule"/>
</dbReference>
<dbReference type="FunFam" id="3.30.1440.10:FF:000001">
    <property type="entry name" value="50S ribosomal protein L5"/>
    <property type="match status" value="1"/>
</dbReference>
<dbReference type="Gene3D" id="3.30.1440.10">
    <property type="match status" value="1"/>
</dbReference>
<dbReference type="HAMAP" id="MF_01333_B">
    <property type="entry name" value="Ribosomal_uL5_B"/>
    <property type="match status" value="1"/>
</dbReference>
<dbReference type="InterPro" id="IPR002132">
    <property type="entry name" value="Ribosomal_uL5"/>
</dbReference>
<dbReference type="InterPro" id="IPR020930">
    <property type="entry name" value="Ribosomal_uL5_bac-type"/>
</dbReference>
<dbReference type="InterPro" id="IPR031309">
    <property type="entry name" value="Ribosomal_uL5_C"/>
</dbReference>
<dbReference type="InterPro" id="IPR020929">
    <property type="entry name" value="Ribosomal_uL5_CS"/>
</dbReference>
<dbReference type="InterPro" id="IPR022803">
    <property type="entry name" value="Ribosomal_uL5_dom_sf"/>
</dbReference>
<dbReference type="InterPro" id="IPR031310">
    <property type="entry name" value="Ribosomal_uL5_N"/>
</dbReference>
<dbReference type="NCBIfam" id="NF000585">
    <property type="entry name" value="PRK00010.1"/>
    <property type="match status" value="1"/>
</dbReference>
<dbReference type="PANTHER" id="PTHR11994">
    <property type="entry name" value="60S RIBOSOMAL PROTEIN L11-RELATED"/>
    <property type="match status" value="1"/>
</dbReference>
<dbReference type="Pfam" id="PF00281">
    <property type="entry name" value="Ribosomal_L5"/>
    <property type="match status" value="1"/>
</dbReference>
<dbReference type="Pfam" id="PF00673">
    <property type="entry name" value="Ribosomal_L5_C"/>
    <property type="match status" value="1"/>
</dbReference>
<dbReference type="PIRSF" id="PIRSF002161">
    <property type="entry name" value="Ribosomal_L5"/>
    <property type="match status" value="1"/>
</dbReference>
<dbReference type="SUPFAM" id="SSF55282">
    <property type="entry name" value="RL5-like"/>
    <property type="match status" value="1"/>
</dbReference>
<dbReference type="PROSITE" id="PS00358">
    <property type="entry name" value="RIBOSOMAL_L5"/>
    <property type="match status" value="1"/>
</dbReference>
<keyword id="KW-1185">Reference proteome</keyword>
<keyword id="KW-0687">Ribonucleoprotein</keyword>
<keyword id="KW-0689">Ribosomal protein</keyword>
<keyword id="KW-0694">RNA-binding</keyword>
<keyword id="KW-0699">rRNA-binding</keyword>
<keyword id="KW-0820">tRNA-binding</keyword>
<sequence length="191" mass="21505">MTEVQQTEKVTPRLKTKYREEIRGALQEQFQYGNVMQVPGLVKVVVNMGVGEAAKDSKIIDGAVTDLTAITGQKPMITKARKSIAQFKLREGMPIGTHATLRGDRMWEFLDRLVTLALPRIRDFRGLSDRQFDGNGNYTFGLSEQTVFHEIDQDKIDRVRGMDITVVTTAKNDDEGRALLKALGFPFKTDQ</sequence>
<comment type="function">
    <text evidence="1">This is one of the proteins that bind and probably mediate the attachment of the 5S RNA into the large ribosomal subunit, where it forms part of the central protuberance. In the 70S ribosome it contacts protein S13 of the 30S subunit (bridge B1b), connecting the 2 subunits; this bridge is implicated in subunit movement. Contacts the P site tRNA; the 5S rRNA and some of its associated proteins might help stabilize positioning of ribosome-bound tRNAs.</text>
</comment>
<comment type="subunit">
    <text evidence="1">Part of the 50S ribosomal subunit; part of the 5S rRNA/L5/L18/L25 subcomplex. Contacts the 5S rRNA and the P site tRNA. Forms a bridge to the 30S subunit in the 70S ribosome.</text>
</comment>
<comment type="similarity">
    <text evidence="1">Belongs to the universal ribosomal protein uL5 family.</text>
</comment>
<evidence type="ECO:0000255" key="1">
    <source>
        <dbReference type="HAMAP-Rule" id="MF_01333"/>
    </source>
</evidence>
<evidence type="ECO:0000305" key="2"/>
<organism>
    <name type="scientific">Micrococcus luteus (strain ATCC 4698 / DSM 20030 / JCM 1464 / CCM 169 / CCUG 5858 / IAM 1056 / NBRC 3333 / NCIMB 9278 / NCTC 2665 / VKM Ac-2230)</name>
    <name type="common">Micrococcus lysodeikticus</name>
    <dbReference type="NCBI Taxonomy" id="465515"/>
    <lineage>
        <taxon>Bacteria</taxon>
        <taxon>Bacillati</taxon>
        <taxon>Actinomycetota</taxon>
        <taxon>Actinomycetes</taxon>
        <taxon>Micrococcales</taxon>
        <taxon>Micrococcaceae</taxon>
        <taxon>Micrococcus</taxon>
    </lineage>
</organism>
<proteinExistence type="inferred from homology"/>